<evidence type="ECO:0000255" key="1">
    <source>
        <dbReference type="HAMAP-Rule" id="MF_03028"/>
    </source>
</evidence>
<evidence type="ECO:0000256" key="2">
    <source>
        <dbReference type="SAM" id="MobiDB-lite"/>
    </source>
</evidence>
<feature type="chain" id="PRO_0000370489" description="Pescadillo homolog">
    <location>
        <begin position="1"/>
        <end position="632"/>
    </location>
</feature>
<feature type="domain" description="BRCT" evidence="1">
    <location>
        <begin position="361"/>
        <end position="459"/>
    </location>
</feature>
<feature type="region of interest" description="Disordered" evidence="2">
    <location>
        <begin position="306"/>
        <end position="341"/>
    </location>
</feature>
<feature type="region of interest" description="Disordered" evidence="2">
    <location>
        <begin position="485"/>
        <end position="535"/>
    </location>
</feature>
<feature type="region of interest" description="Disordered" evidence="2">
    <location>
        <begin position="565"/>
        <end position="585"/>
    </location>
</feature>
<feature type="region of interest" description="Disordered" evidence="2">
    <location>
        <begin position="601"/>
        <end position="632"/>
    </location>
</feature>
<feature type="coiled-coil region" evidence="1">
    <location>
        <begin position="595"/>
        <end position="632"/>
    </location>
</feature>
<feature type="compositionally biased region" description="Acidic residues" evidence="2">
    <location>
        <begin position="307"/>
        <end position="328"/>
    </location>
</feature>
<feature type="compositionally biased region" description="Acidic residues" evidence="2">
    <location>
        <begin position="492"/>
        <end position="516"/>
    </location>
</feature>
<feature type="compositionally biased region" description="Low complexity" evidence="2">
    <location>
        <begin position="521"/>
        <end position="531"/>
    </location>
</feature>
<feature type="compositionally biased region" description="Basic and acidic residues" evidence="2">
    <location>
        <begin position="576"/>
        <end position="585"/>
    </location>
</feature>
<feature type="compositionally biased region" description="Basic and acidic residues" evidence="2">
    <location>
        <begin position="605"/>
        <end position="616"/>
    </location>
</feature>
<sequence length="632" mass="71273">MAKIKKRGESGAAKNYVTRNQALKKLQISLSDFRRLCILKGIYPREPLNKKRANKGSSAPASFYYHKDIQYLLHEPLLVKFREHKAFAKKLARAIGRQEWGLAKNLEDAKPVARLDHLVRERYPTFTLALQDLQDPLNLVHLFSTLPTNPIPGKTLVPSEVIAECSRLISEWKLWAIRTHSLRKMFLGIKGVYYECEVPGQGGEPVRVRWLEGFEFQQHVPHDVDFRILLTFLDLYRTMVGFVLFKLYTDENLVYPPPLDVELDEQGESVGAFKLVERKAAEGADGKTQVSKKAVRKAIKGIKAAGDDADVDMDEGAKETDEEEDEDFVERPSKAQEVDDVASAPLTTYNSLLATSSTPARQNLLFSPYTFYLSRETSSRTWEFVVRAMGGKVITSLTAPTPADAPNADSITHVIIDRPITVERMREMEAGRKWVWIQPQWVADCVNKQKIISSEGYGPGQLLPPHLSPWDGEGELYRPWLEEQGEKAAEGQEGEEEEEAAEQDEGESEDEEEDGKEEVAAEYPPALLAAAQNPSDASLLHAAELEAETNGVSHSAFRAQLKEATKVHAKKVPASQKEKKGEEDLRKIMMSNKKAKLYEKMQYSNREKAAEKEKLEKKRKAIEKRKAKEAKA</sequence>
<dbReference type="EMBL" id="AE017342">
    <property type="protein sequence ID" value="AAW41492.1"/>
    <property type="molecule type" value="Genomic_DNA"/>
</dbReference>
<dbReference type="RefSeq" id="XP_568799.1">
    <property type="nucleotide sequence ID" value="XM_568799.1"/>
</dbReference>
<dbReference type="SMR" id="P0CP58"/>
<dbReference type="FunCoup" id="P0CP58">
    <property type="interactions" value="765"/>
</dbReference>
<dbReference type="STRING" id="214684.P0CP58"/>
<dbReference type="PaxDb" id="214684-P0CP58"/>
<dbReference type="EnsemblFungi" id="AAW41492">
    <property type="protein sequence ID" value="AAW41492"/>
    <property type="gene ID" value="CNB01260"/>
</dbReference>
<dbReference type="VEuPathDB" id="FungiDB:CNB01260"/>
<dbReference type="eggNOG" id="KOG2481">
    <property type="taxonomic scope" value="Eukaryota"/>
</dbReference>
<dbReference type="HOGENOM" id="CLU_019619_1_1_1"/>
<dbReference type="InParanoid" id="P0CP58"/>
<dbReference type="OMA" id="QKVTWIV"/>
<dbReference type="OrthoDB" id="10264910at2759"/>
<dbReference type="Proteomes" id="UP000002149">
    <property type="component" value="Chromosome 2"/>
</dbReference>
<dbReference type="GO" id="GO:0005654">
    <property type="term" value="C:nucleoplasm"/>
    <property type="evidence" value="ECO:0007669"/>
    <property type="project" value="UniProtKB-SubCell"/>
</dbReference>
<dbReference type="GO" id="GO:0070545">
    <property type="term" value="C:PeBoW complex"/>
    <property type="evidence" value="ECO:0000318"/>
    <property type="project" value="GO_Central"/>
</dbReference>
<dbReference type="GO" id="GO:0030687">
    <property type="term" value="C:preribosome, large subunit precursor"/>
    <property type="evidence" value="ECO:0007669"/>
    <property type="project" value="UniProtKB-UniRule"/>
</dbReference>
<dbReference type="GO" id="GO:0043021">
    <property type="term" value="F:ribonucleoprotein complex binding"/>
    <property type="evidence" value="ECO:0007669"/>
    <property type="project" value="UniProtKB-UniRule"/>
</dbReference>
<dbReference type="GO" id="GO:0003723">
    <property type="term" value="F:RNA binding"/>
    <property type="evidence" value="ECO:0000318"/>
    <property type="project" value="GO_Central"/>
</dbReference>
<dbReference type="GO" id="GO:0000466">
    <property type="term" value="P:maturation of 5.8S rRNA from tricistronic rRNA transcript (SSU-rRNA, 5.8S rRNA, LSU-rRNA)"/>
    <property type="evidence" value="ECO:0007669"/>
    <property type="project" value="UniProtKB-UniRule"/>
</dbReference>
<dbReference type="GO" id="GO:0000463">
    <property type="term" value="P:maturation of LSU-rRNA from tricistronic rRNA transcript (SSU-rRNA, 5.8S rRNA, LSU-rRNA)"/>
    <property type="evidence" value="ECO:0000318"/>
    <property type="project" value="GO_Central"/>
</dbReference>
<dbReference type="Gene3D" id="3.40.50.10190">
    <property type="entry name" value="BRCT domain"/>
    <property type="match status" value="1"/>
</dbReference>
<dbReference type="HAMAP" id="MF_03028">
    <property type="entry name" value="Pescadillo"/>
    <property type="match status" value="1"/>
</dbReference>
<dbReference type="InterPro" id="IPR001357">
    <property type="entry name" value="BRCT_dom"/>
</dbReference>
<dbReference type="InterPro" id="IPR036420">
    <property type="entry name" value="BRCT_dom_sf"/>
</dbReference>
<dbReference type="InterPro" id="IPR010613">
    <property type="entry name" value="PES"/>
</dbReference>
<dbReference type="PANTHER" id="PTHR12221">
    <property type="entry name" value="PESCADILLO - RELATED"/>
    <property type="match status" value="1"/>
</dbReference>
<dbReference type="PANTHER" id="PTHR12221:SF6">
    <property type="entry name" value="PESCADILLO HOMOLOG"/>
    <property type="match status" value="1"/>
</dbReference>
<dbReference type="Pfam" id="PF16589">
    <property type="entry name" value="BRCT_2"/>
    <property type="match status" value="1"/>
</dbReference>
<dbReference type="Pfam" id="PF06732">
    <property type="entry name" value="Pescadillo_N"/>
    <property type="match status" value="1"/>
</dbReference>
<dbReference type="SMART" id="SM00292">
    <property type="entry name" value="BRCT"/>
    <property type="match status" value="1"/>
</dbReference>
<dbReference type="SUPFAM" id="SSF52113">
    <property type="entry name" value="BRCT domain"/>
    <property type="match status" value="1"/>
</dbReference>
<dbReference type="PROSITE" id="PS50172">
    <property type="entry name" value="BRCT"/>
    <property type="match status" value="1"/>
</dbReference>
<gene>
    <name evidence="1" type="primary">NOP7</name>
    <name type="ordered locus">CNB01260</name>
</gene>
<keyword id="KW-0175">Coiled coil</keyword>
<keyword id="KW-0539">Nucleus</keyword>
<keyword id="KW-1185">Reference proteome</keyword>
<keyword id="KW-0690">Ribosome biogenesis</keyword>
<keyword id="KW-0698">rRNA processing</keyword>
<accession>P0CP58</accession>
<accession>Q55XB6</accession>
<accession>Q5KML7</accession>
<protein>
    <recommendedName>
        <fullName evidence="1">Pescadillo homolog</fullName>
    </recommendedName>
    <alternativeName>
        <fullName evidence="1">Nucleolar protein 7 homolog</fullName>
    </alternativeName>
</protein>
<name>PESC_CRYNJ</name>
<reference key="1">
    <citation type="journal article" date="2005" name="Science">
        <title>The genome of the basidiomycetous yeast and human pathogen Cryptococcus neoformans.</title>
        <authorList>
            <person name="Loftus B.J."/>
            <person name="Fung E."/>
            <person name="Roncaglia P."/>
            <person name="Rowley D."/>
            <person name="Amedeo P."/>
            <person name="Bruno D."/>
            <person name="Vamathevan J."/>
            <person name="Miranda M."/>
            <person name="Anderson I.J."/>
            <person name="Fraser J.A."/>
            <person name="Allen J.E."/>
            <person name="Bosdet I.E."/>
            <person name="Brent M.R."/>
            <person name="Chiu R."/>
            <person name="Doering T.L."/>
            <person name="Donlin M.J."/>
            <person name="D'Souza C.A."/>
            <person name="Fox D.S."/>
            <person name="Grinberg V."/>
            <person name="Fu J."/>
            <person name="Fukushima M."/>
            <person name="Haas B.J."/>
            <person name="Huang J.C."/>
            <person name="Janbon G."/>
            <person name="Jones S.J.M."/>
            <person name="Koo H.L."/>
            <person name="Krzywinski M.I."/>
            <person name="Kwon-Chung K.J."/>
            <person name="Lengeler K.B."/>
            <person name="Maiti R."/>
            <person name="Marra M.A."/>
            <person name="Marra R.E."/>
            <person name="Mathewson C.A."/>
            <person name="Mitchell T.G."/>
            <person name="Pertea M."/>
            <person name="Riggs F.R."/>
            <person name="Salzberg S.L."/>
            <person name="Schein J.E."/>
            <person name="Shvartsbeyn A."/>
            <person name="Shin H."/>
            <person name="Shumway M."/>
            <person name="Specht C.A."/>
            <person name="Suh B.B."/>
            <person name="Tenney A."/>
            <person name="Utterback T.R."/>
            <person name="Wickes B.L."/>
            <person name="Wortman J.R."/>
            <person name="Wye N.H."/>
            <person name="Kronstad J.W."/>
            <person name="Lodge J.K."/>
            <person name="Heitman J."/>
            <person name="Davis R.W."/>
            <person name="Fraser C.M."/>
            <person name="Hyman R.W."/>
        </authorList>
    </citation>
    <scope>NUCLEOTIDE SEQUENCE [LARGE SCALE GENOMIC DNA]</scope>
    <source>
        <strain>JEC21 / ATCC MYA-565</strain>
    </source>
</reference>
<proteinExistence type="inferred from homology"/>
<comment type="function">
    <text evidence="1">Component of the NOP7 complex, which is required for maturation of the 25S and 5.8S ribosomal RNAs and formation of the 60S ribosome.</text>
</comment>
<comment type="subunit">
    <text evidence="1">Component of the NOP7 complex, composed of ERB1, NOP7 and YTM1. The complex is held together by ERB1, which interacts with NOP7 via its N-terminal domain and with YTM1 via a high-affinity interaction between the seven-bladed beta-propeller domains of the 2 proteins. The NOP7 complex associates with the 66S pre-ribosome.</text>
</comment>
<comment type="subcellular location">
    <subcellularLocation>
        <location evidence="1">Nucleus</location>
        <location evidence="1">Nucleolus</location>
    </subcellularLocation>
    <subcellularLocation>
        <location evidence="1">Nucleus</location>
        <location evidence="1">Nucleoplasm</location>
    </subcellularLocation>
</comment>
<comment type="similarity">
    <text evidence="1">Belongs to the pescadillo family.</text>
</comment>
<organism>
    <name type="scientific">Cryptococcus neoformans var. neoformans serotype D (strain JEC21 / ATCC MYA-565)</name>
    <name type="common">Filobasidiella neoformans</name>
    <dbReference type="NCBI Taxonomy" id="214684"/>
    <lineage>
        <taxon>Eukaryota</taxon>
        <taxon>Fungi</taxon>
        <taxon>Dikarya</taxon>
        <taxon>Basidiomycota</taxon>
        <taxon>Agaricomycotina</taxon>
        <taxon>Tremellomycetes</taxon>
        <taxon>Tremellales</taxon>
        <taxon>Cryptococcaceae</taxon>
        <taxon>Cryptococcus</taxon>
        <taxon>Cryptococcus neoformans species complex</taxon>
    </lineage>
</organism>